<protein>
    <recommendedName>
        <fullName evidence="1">Uridylate kinase</fullName>
        <shortName evidence="1">UK</shortName>
        <ecNumber evidence="1">2.7.4.22</ecNumber>
    </recommendedName>
    <alternativeName>
        <fullName evidence="1">Uridine monophosphate kinase</fullName>
        <shortName evidence="1">UMP kinase</shortName>
        <shortName evidence="1">UMPK</shortName>
    </alternativeName>
</protein>
<reference key="1">
    <citation type="journal article" date="2008" name="PLoS ONE">
        <title>Genetic basis of virulence attenuation revealed by comparative genomic analysis of Mycobacterium tuberculosis strain H37Ra versus H37Rv.</title>
        <authorList>
            <person name="Zheng H."/>
            <person name="Lu L."/>
            <person name="Wang B."/>
            <person name="Pu S."/>
            <person name="Zhang X."/>
            <person name="Zhu G."/>
            <person name="Shi W."/>
            <person name="Zhang L."/>
            <person name="Wang H."/>
            <person name="Wang S."/>
            <person name="Zhao G."/>
            <person name="Zhang Y."/>
        </authorList>
    </citation>
    <scope>NUCLEOTIDE SEQUENCE [LARGE SCALE GENOMIC DNA]</scope>
    <source>
        <strain>ATCC 25177 / H37Ra</strain>
    </source>
</reference>
<accession>A5U6N8</accession>
<organism>
    <name type="scientific">Mycobacterium tuberculosis (strain ATCC 25177 / H37Ra)</name>
    <dbReference type="NCBI Taxonomy" id="419947"/>
    <lineage>
        <taxon>Bacteria</taxon>
        <taxon>Bacillati</taxon>
        <taxon>Actinomycetota</taxon>
        <taxon>Actinomycetes</taxon>
        <taxon>Mycobacteriales</taxon>
        <taxon>Mycobacteriaceae</taxon>
        <taxon>Mycobacterium</taxon>
        <taxon>Mycobacterium tuberculosis complex</taxon>
    </lineage>
</organism>
<keyword id="KW-0067">ATP-binding</keyword>
<keyword id="KW-0963">Cytoplasm</keyword>
<keyword id="KW-0418">Kinase</keyword>
<keyword id="KW-0547">Nucleotide-binding</keyword>
<keyword id="KW-0665">Pyrimidine biosynthesis</keyword>
<keyword id="KW-1185">Reference proteome</keyword>
<keyword id="KW-0808">Transferase</keyword>
<feature type="chain" id="PRO_1000053963" description="Uridylate kinase">
    <location>
        <begin position="1"/>
        <end position="261"/>
    </location>
</feature>
<feature type="region of interest" description="Disordered" evidence="2">
    <location>
        <begin position="1"/>
        <end position="23"/>
    </location>
</feature>
<feature type="binding site" evidence="1">
    <location>
        <begin position="36"/>
        <end position="39"/>
    </location>
    <ligand>
        <name>ATP</name>
        <dbReference type="ChEBI" id="CHEBI:30616"/>
    </ligand>
</feature>
<feature type="binding site" evidence="1">
    <location>
        <position position="77"/>
    </location>
    <ligand>
        <name>UMP</name>
        <dbReference type="ChEBI" id="CHEBI:57865"/>
    </ligand>
</feature>
<feature type="binding site" evidence="1">
    <location>
        <position position="78"/>
    </location>
    <ligand>
        <name>ATP</name>
        <dbReference type="ChEBI" id="CHEBI:30616"/>
    </ligand>
</feature>
<feature type="binding site" evidence="1">
    <location>
        <position position="82"/>
    </location>
    <ligand>
        <name>ATP</name>
        <dbReference type="ChEBI" id="CHEBI:30616"/>
    </ligand>
</feature>
<feature type="binding site" evidence="1">
    <location>
        <position position="97"/>
    </location>
    <ligand>
        <name>UMP</name>
        <dbReference type="ChEBI" id="CHEBI:57865"/>
    </ligand>
</feature>
<feature type="binding site" evidence="1">
    <location>
        <begin position="158"/>
        <end position="165"/>
    </location>
    <ligand>
        <name>UMP</name>
        <dbReference type="ChEBI" id="CHEBI:57865"/>
    </ligand>
</feature>
<feature type="binding site" evidence="1">
    <location>
        <position position="191"/>
    </location>
    <ligand>
        <name>ATP</name>
        <dbReference type="ChEBI" id="CHEBI:30616"/>
    </ligand>
</feature>
<feature type="binding site" evidence="1">
    <location>
        <position position="194"/>
    </location>
    <ligand>
        <name>ATP</name>
        <dbReference type="ChEBI" id="CHEBI:30616"/>
    </ligand>
</feature>
<comment type="function">
    <text evidence="1">Catalyzes the reversible phosphorylation of UMP to UDP.</text>
</comment>
<comment type="catalytic activity">
    <reaction evidence="1">
        <text>UMP + ATP = UDP + ADP</text>
        <dbReference type="Rhea" id="RHEA:24400"/>
        <dbReference type="ChEBI" id="CHEBI:30616"/>
        <dbReference type="ChEBI" id="CHEBI:57865"/>
        <dbReference type="ChEBI" id="CHEBI:58223"/>
        <dbReference type="ChEBI" id="CHEBI:456216"/>
        <dbReference type="EC" id="2.7.4.22"/>
    </reaction>
</comment>
<comment type="activity regulation">
    <text evidence="1">Inhibited by UTP.</text>
</comment>
<comment type="pathway">
    <text evidence="1">Pyrimidine metabolism; CTP biosynthesis via de novo pathway; UDP from UMP (UMPK route): step 1/1.</text>
</comment>
<comment type="subunit">
    <text evidence="1">Homohexamer.</text>
</comment>
<comment type="subcellular location">
    <subcellularLocation>
        <location evidence="1">Cytoplasm</location>
    </subcellularLocation>
</comment>
<comment type="similarity">
    <text evidence="1">Belongs to the UMP kinase family.</text>
</comment>
<sequence length="261" mass="27430">MTEPDVAGAPASKPEPASTGAASAAQLSGYSRVLLKLGGEMFGGGQVGLDPDVVAQVARQIADVVRGGVQIAVVIGGGNFFRGAQLQQLGMERTRSDYMGMLGTVMNSLALQDFLEKEGIVTRVQTAITMGQVAEPYLPLRAVRHLEKGRVVIFGAGMGLPYFSTDTTAAQRALEIGADVVLMAKAVDGVFAEDPRVNPEAELLTAVSHREVLDRGLRVADATAFSLCMDNGMPILVFNLLTDGNIARAVRGEKIGTLVTT</sequence>
<evidence type="ECO:0000255" key="1">
    <source>
        <dbReference type="HAMAP-Rule" id="MF_01220"/>
    </source>
</evidence>
<evidence type="ECO:0000256" key="2">
    <source>
        <dbReference type="SAM" id="MobiDB-lite"/>
    </source>
</evidence>
<dbReference type="EC" id="2.7.4.22" evidence="1"/>
<dbReference type="EMBL" id="CP000611">
    <property type="protein sequence ID" value="ABQ74688.1"/>
    <property type="molecule type" value="Genomic_DNA"/>
</dbReference>
<dbReference type="RefSeq" id="WP_003414665.1">
    <property type="nucleotide sequence ID" value="NZ_CP016972.1"/>
</dbReference>
<dbReference type="SMR" id="A5U6N8"/>
<dbReference type="GeneID" id="45426871"/>
<dbReference type="KEGG" id="mra:MRA_2908"/>
<dbReference type="eggNOG" id="COG0528">
    <property type="taxonomic scope" value="Bacteria"/>
</dbReference>
<dbReference type="HOGENOM" id="CLU_033861_0_0_11"/>
<dbReference type="UniPathway" id="UPA00159">
    <property type="reaction ID" value="UER00275"/>
</dbReference>
<dbReference type="Proteomes" id="UP000001988">
    <property type="component" value="Chromosome"/>
</dbReference>
<dbReference type="GO" id="GO:0005737">
    <property type="term" value="C:cytoplasm"/>
    <property type="evidence" value="ECO:0007669"/>
    <property type="project" value="UniProtKB-SubCell"/>
</dbReference>
<dbReference type="GO" id="GO:0005524">
    <property type="term" value="F:ATP binding"/>
    <property type="evidence" value="ECO:0007669"/>
    <property type="project" value="UniProtKB-KW"/>
</dbReference>
<dbReference type="GO" id="GO:0033862">
    <property type="term" value="F:UMP kinase activity"/>
    <property type="evidence" value="ECO:0007669"/>
    <property type="project" value="UniProtKB-EC"/>
</dbReference>
<dbReference type="GO" id="GO:0044210">
    <property type="term" value="P:'de novo' CTP biosynthetic process"/>
    <property type="evidence" value="ECO:0007669"/>
    <property type="project" value="UniProtKB-UniRule"/>
</dbReference>
<dbReference type="GO" id="GO:0006225">
    <property type="term" value="P:UDP biosynthetic process"/>
    <property type="evidence" value="ECO:0007669"/>
    <property type="project" value="TreeGrafter"/>
</dbReference>
<dbReference type="CDD" id="cd04254">
    <property type="entry name" value="AAK_UMPK-PyrH-Ec"/>
    <property type="match status" value="1"/>
</dbReference>
<dbReference type="FunFam" id="3.40.1160.10:FF:000001">
    <property type="entry name" value="Uridylate kinase"/>
    <property type="match status" value="1"/>
</dbReference>
<dbReference type="Gene3D" id="3.40.1160.10">
    <property type="entry name" value="Acetylglutamate kinase-like"/>
    <property type="match status" value="1"/>
</dbReference>
<dbReference type="HAMAP" id="MF_01220_B">
    <property type="entry name" value="PyrH_B"/>
    <property type="match status" value="1"/>
</dbReference>
<dbReference type="InterPro" id="IPR036393">
    <property type="entry name" value="AceGlu_kinase-like_sf"/>
</dbReference>
<dbReference type="InterPro" id="IPR001048">
    <property type="entry name" value="Asp/Glu/Uridylate_kinase"/>
</dbReference>
<dbReference type="InterPro" id="IPR011817">
    <property type="entry name" value="Uridylate_kinase"/>
</dbReference>
<dbReference type="InterPro" id="IPR015963">
    <property type="entry name" value="Uridylate_kinase_bac"/>
</dbReference>
<dbReference type="NCBIfam" id="TIGR02075">
    <property type="entry name" value="pyrH_bact"/>
    <property type="match status" value="1"/>
</dbReference>
<dbReference type="PANTHER" id="PTHR42833">
    <property type="entry name" value="URIDYLATE KINASE"/>
    <property type="match status" value="1"/>
</dbReference>
<dbReference type="PANTHER" id="PTHR42833:SF4">
    <property type="entry name" value="URIDYLATE KINASE PUMPKIN, CHLOROPLASTIC"/>
    <property type="match status" value="1"/>
</dbReference>
<dbReference type="Pfam" id="PF00696">
    <property type="entry name" value="AA_kinase"/>
    <property type="match status" value="1"/>
</dbReference>
<dbReference type="PIRSF" id="PIRSF005650">
    <property type="entry name" value="Uridylate_kin"/>
    <property type="match status" value="1"/>
</dbReference>
<dbReference type="SUPFAM" id="SSF53633">
    <property type="entry name" value="Carbamate kinase-like"/>
    <property type="match status" value="1"/>
</dbReference>
<proteinExistence type="inferred from homology"/>
<gene>
    <name evidence="1" type="primary">pyrH</name>
    <name type="ordered locus">MRA_2908</name>
</gene>
<name>PYRH_MYCTA</name>